<proteinExistence type="inferred from homology"/>
<comment type="function">
    <text evidence="1">Forms part of the ribosomal stalk which helps the ribosome interact with GTP-bound translation factors. Is thus essential for accurate translation.</text>
</comment>
<comment type="subunit">
    <text evidence="1">Homodimer. Part of the ribosomal stalk of the 50S ribosomal subunit. Forms a multimeric L10(L12)X complex, where L10 forms an elongated spine to which 2 to 4 L12 dimers bind in a sequential fashion. Binds GTP-bound translation factors.</text>
</comment>
<comment type="similarity">
    <text evidence="1">Belongs to the bacterial ribosomal protein bL12 family.</text>
</comment>
<comment type="sequence caution" evidence="2">
    <conflict type="erroneous initiation">
        <sequence resource="EMBL-CDS" id="AAL02718"/>
    </conflict>
</comment>
<dbReference type="EMBL" id="AE006914">
    <property type="protein sequence ID" value="AAL02718.1"/>
    <property type="status" value="ALT_INIT"/>
    <property type="molecule type" value="Genomic_DNA"/>
</dbReference>
<dbReference type="PIR" id="D97722">
    <property type="entry name" value="D97722"/>
</dbReference>
<dbReference type="RefSeq" id="WP_010976850.1">
    <property type="nucleotide sequence ID" value="NC_003103.1"/>
</dbReference>
<dbReference type="SMR" id="Q92J87"/>
<dbReference type="GeneID" id="928011"/>
<dbReference type="KEGG" id="rco:RC0180"/>
<dbReference type="PATRIC" id="fig|272944.4.peg.209"/>
<dbReference type="HOGENOM" id="CLU_086499_3_0_5"/>
<dbReference type="Proteomes" id="UP000000816">
    <property type="component" value="Chromosome"/>
</dbReference>
<dbReference type="GO" id="GO:0005737">
    <property type="term" value="C:cytoplasm"/>
    <property type="evidence" value="ECO:0007669"/>
    <property type="project" value="UniProtKB-ARBA"/>
</dbReference>
<dbReference type="GO" id="GO:1990904">
    <property type="term" value="C:ribonucleoprotein complex"/>
    <property type="evidence" value="ECO:0007669"/>
    <property type="project" value="UniProtKB-KW"/>
</dbReference>
<dbReference type="GO" id="GO:0005840">
    <property type="term" value="C:ribosome"/>
    <property type="evidence" value="ECO:0007669"/>
    <property type="project" value="UniProtKB-KW"/>
</dbReference>
<dbReference type="GO" id="GO:0003729">
    <property type="term" value="F:mRNA binding"/>
    <property type="evidence" value="ECO:0007669"/>
    <property type="project" value="TreeGrafter"/>
</dbReference>
<dbReference type="GO" id="GO:0003735">
    <property type="term" value="F:structural constituent of ribosome"/>
    <property type="evidence" value="ECO:0007669"/>
    <property type="project" value="InterPro"/>
</dbReference>
<dbReference type="GO" id="GO:0006412">
    <property type="term" value="P:translation"/>
    <property type="evidence" value="ECO:0007669"/>
    <property type="project" value="UniProtKB-UniRule"/>
</dbReference>
<dbReference type="CDD" id="cd00387">
    <property type="entry name" value="Ribosomal_L7_L12"/>
    <property type="match status" value="1"/>
</dbReference>
<dbReference type="FunFam" id="3.30.1390.10:FF:000001">
    <property type="entry name" value="50S ribosomal protein L7/L12"/>
    <property type="match status" value="1"/>
</dbReference>
<dbReference type="Gene3D" id="3.30.1390.10">
    <property type="match status" value="1"/>
</dbReference>
<dbReference type="Gene3D" id="1.20.5.710">
    <property type="entry name" value="Single helix bin"/>
    <property type="match status" value="1"/>
</dbReference>
<dbReference type="HAMAP" id="MF_00368">
    <property type="entry name" value="Ribosomal_bL12"/>
    <property type="match status" value="1"/>
</dbReference>
<dbReference type="InterPro" id="IPR000206">
    <property type="entry name" value="Ribosomal_bL12"/>
</dbReference>
<dbReference type="InterPro" id="IPR013823">
    <property type="entry name" value="Ribosomal_bL12_C"/>
</dbReference>
<dbReference type="InterPro" id="IPR014719">
    <property type="entry name" value="Ribosomal_bL12_C/ClpS-like"/>
</dbReference>
<dbReference type="InterPro" id="IPR008932">
    <property type="entry name" value="Ribosomal_bL12_oligo"/>
</dbReference>
<dbReference type="InterPro" id="IPR036235">
    <property type="entry name" value="Ribosomal_bL12_oligo_N_sf"/>
</dbReference>
<dbReference type="NCBIfam" id="TIGR00855">
    <property type="entry name" value="L12"/>
    <property type="match status" value="1"/>
</dbReference>
<dbReference type="PANTHER" id="PTHR45987">
    <property type="entry name" value="39S RIBOSOMAL PROTEIN L12"/>
    <property type="match status" value="1"/>
</dbReference>
<dbReference type="PANTHER" id="PTHR45987:SF4">
    <property type="entry name" value="LARGE RIBOSOMAL SUBUNIT PROTEIN BL12M"/>
    <property type="match status" value="1"/>
</dbReference>
<dbReference type="Pfam" id="PF00542">
    <property type="entry name" value="Ribosomal_L12"/>
    <property type="match status" value="1"/>
</dbReference>
<dbReference type="Pfam" id="PF16320">
    <property type="entry name" value="Ribosomal_L12_N"/>
    <property type="match status" value="1"/>
</dbReference>
<dbReference type="SUPFAM" id="SSF54736">
    <property type="entry name" value="ClpS-like"/>
    <property type="match status" value="1"/>
</dbReference>
<dbReference type="SUPFAM" id="SSF48300">
    <property type="entry name" value="Ribosomal protein L7/12, oligomerisation (N-terminal) domain"/>
    <property type="match status" value="1"/>
</dbReference>
<protein>
    <recommendedName>
        <fullName evidence="1">Large ribosomal subunit protein bL12</fullName>
    </recommendedName>
    <alternativeName>
        <fullName evidence="2">50S ribosomal protein L7/L12</fullName>
    </alternativeName>
</protein>
<feature type="chain" id="PRO_0000157569" description="Large ribosomal subunit protein bL12">
    <location>
        <begin position="1"/>
        <end position="125"/>
    </location>
</feature>
<reference key="1">
    <citation type="journal article" date="2001" name="Science">
        <title>Mechanisms of evolution in Rickettsia conorii and R. prowazekii.</title>
        <authorList>
            <person name="Ogata H."/>
            <person name="Audic S."/>
            <person name="Renesto-Audiffren P."/>
            <person name="Fournier P.-E."/>
            <person name="Barbe V."/>
            <person name="Samson D."/>
            <person name="Roux V."/>
            <person name="Cossart P."/>
            <person name="Weissenbach J."/>
            <person name="Claverie J.-M."/>
            <person name="Raoult D."/>
        </authorList>
    </citation>
    <scope>NUCLEOTIDE SEQUENCE [LARGE SCALE GENOMIC DNA]</scope>
    <source>
        <strain>ATCC VR-613 / Malish 7</strain>
    </source>
</reference>
<keyword id="KW-0687">Ribonucleoprotein</keyword>
<keyword id="KW-0689">Ribosomal protein</keyword>
<sequence length="125" mass="12976">MADLAKIEEQLSSLTLMQAAELVKMLEEKWGVSAAAPVAVAAVGAAAPAAEAVAEKTEFEVVLTAAGDKKVEVIKVVKDITGLGLIEAKKLVDEAPKPIKSNVKKAEADEIKGKLEAAGAKVELK</sequence>
<gene>
    <name evidence="1" type="primary">rplL</name>
    <name type="ordered locus">RC0180</name>
</gene>
<organism>
    <name type="scientific">Rickettsia conorii (strain ATCC VR-613 / Malish 7)</name>
    <dbReference type="NCBI Taxonomy" id="272944"/>
    <lineage>
        <taxon>Bacteria</taxon>
        <taxon>Pseudomonadati</taxon>
        <taxon>Pseudomonadota</taxon>
        <taxon>Alphaproteobacteria</taxon>
        <taxon>Rickettsiales</taxon>
        <taxon>Rickettsiaceae</taxon>
        <taxon>Rickettsieae</taxon>
        <taxon>Rickettsia</taxon>
        <taxon>spotted fever group</taxon>
    </lineage>
</organism>
<accession>Q92J87</accession>
<evidence type="ECO:0000255" key="1">
    <source>
        <dbReference type="HAMAP-Rule" id="MF_00368"/>
    </source>
</evidence>
<evidence type="ECO:0000305" key="2"/>
<name>RL7_RICCN</name>